<reference key="1">
    <citation type="journal article" date="2003" name="Nat. Genet.">
        <title>Comparative analysis of the genome sequences of Bordetella pertussis, Bordetella parapertussis and Bordetella bronchiseptica.</title>
        <authorList>
            <person name="Parkhill J."/>
            <person name="Sebaihia M."/>
            <person name="Preston A."/>
            <person name="Murphy L.D."/>
            <person name="Thomson N.R."/>
            <person name="Harris D.E."/>
            <person name="Holden M.T.G."/>
            <person name="Churcher C.M."/>
            <person name="Bentley S.D."/>
            <person name="Mungall K.L."/>
            <person name="Cerdeno-Tarraga A.-M."/>
            <person name="Temple L."/>
            <person name="James K.D."/>
            <person name="Harris B."/>
            <person name="Quail M.A."/>
            <person name="Achtman M."/>
            <person name="Atkin R."/>
            <person name="Baker S."/>
            <person name="Basham D."/>
            <person name="Bason N."/>
            <person name="Cherevach I."/>
            <person name="Chillingworth T."/>
            <person name="Collins M."/>
            <person name="Cronin A."/>
            <person name="Davis P."/>
            <person name="Doggett J."/>
            <person name="Feltwell T."/>
            <person name="Goble A."/>
            <person name="Hamlin N."/>
            <person name="Hauser H."/>
            <person name="Holroyd S."/>
            <person name="Jagels K."/>
            <person name="Leather S."/>
            <person name="Moule S."/>
            <person name="Norberczak H."/>
            <person name="O'Neil S."/>
            <person name="Ormond D."/>
            <person name="Price C."/>
            <person name="Rabbinowitsch E."/>
            <person name="Rutter S."/>
            <person name="Sanders M."/>
            <person name="Saunders D."/>
            <person name="Seeger K."/>
            <person name="Sharp S."/>
            <person name="Simmonds M."/>
            <person name="Skelton J."/>
            <person name="Squares R."/>
            <person name="Squares S."/>
            <person name="Stevens K."/>
            <person name="Unwin L."/>
            <person name="Whitehead S."/>
            <person name="Barrell B.G."/>
            <person name="Maskell D.J."/>
        </authorList>
    </citation>
    <scope>NUCLEOTIDE SEQUENCE [LARGE SCALE GENOMIC DNA]</scope>
    <source>
        <strain>ATCC BAA-588 / NCTC 13252 / RB50</strain>
    </source>
</reference>
<name>APAH_BORBR</name>
<protein>
    <recommendedName>
        <fullName evidence="1">Bis(5'-nucleosyl)-tetraphosphatase, symmetrical</fullName>
        <ecNumber evidence="1">3.6.1.41</ecNumber>
    </recommendedName>
    <alternativeName>
        <fullName evidence="1">Ap4A hydrolase</fullName>
    </alternativeName>
    <alternativeName>
        <fullName evidence="1">Diadenosine 5',5'''-P1,P4-tetraphosphate pyrophosphohydrolase</fullName>
    </alternativeName>
    <alternativeName>
        <fullName evidence="1">Diadenosine tetraphosphatase</fullName>
    </alternativeName>
</protein>
<organism>
    <name type="scientific">Bordetella bronchiseptica (strain ATCC BAA-588 / NCTC 13252 / RB50)</name>
    <name type="common">Alcaligenes bronchisepticus</name>
    <dbReference type="NCBI Taxonomy" id="257310"/>
    <lineage>
        <taxon>Bacteria</taxon>
        <taxon>Pseudomonadati</taxon>
        <taxon>Pseudomonadota</taxon>
        <taxon>Betaproteobacteria</taxon>
        <taxon>Burkholderiales</taxon>
        <taxon>Alcaligenaceae</taxon>
        <taxon>Bordetella</taxon>
    </lineage>
</organism>
<dbReference type="EC" id="3.6.1.41" evidence="1"/>
<dbReference type="EMBL" id="BX640450">
    <property type="protein sequence ID" value="CAE34763.1"/>
    <property type="molecule type" value="Genomic_DNA"/>
</dbReference>
<dbReference type="RefSeq" id="WP_003814962.1">
    <property type="nucleotide sequence ID" value="NC_002927.3"/>
</dbReference>
<dbReference type="SMR" id="Q7WF80"/>
<dbReference type="KEGG" id="bbr:BB4400"/>
<dbReference type="eggNOG" id="COG0639">
    <property type="taxonomic scope" value="Bacteria"/>
</dbReference>
<dbReference type="HOGENOM" id="CLU_056184_1_0_4"/>
<dbReference type="Proteomes" id="UP000001027">
    <property type="component" value="Chromosome"/>
</dbReference>
<dbReference type="GO" id="GO:0008803">
    <property type="term" value="F:bis(5'-nucleosyl)-tetraphosphatase (symmetrical) activity"/>
    <property type="evidence" value="ECO:0007669"/>
    <property type="project" value="UniProtKB-UniRule"/>
</dbReference>
<dbReference type="CDD" id="cd07422">
    <property type="entry name" value="MPP_ApaH"/>
    <property type="match status" value="1"/>
</dbReference>
<dbReference type="Gene3D" id="3.60.21.10">
    <property type="match status" value="1"/>
</dbReference>
<dbReference type="HAMAP" id="MF_00199">
    <property type="entry name" value="ApaH"/>
    <property type="match status" value="1"/>
</dbReference>
<dbReference type="InterPro" id="IPR004617">
    <property type="entry name" value="ApaH"/>
</dbReference>
<dbReference type="InterPro" id="IPR004843">
    <property type="entry name" value="Calcineurin-like_PHP_ApaH"/>
</dbReference>
<dbReference type="InterPro" id="IPR029052">
    <property type="entry name" value="Metallo-depent_PP-like"/>
</dbReference>
<dbReference type="NCBIfam" id="TIGR00668">
    <property type="entry name" value="apaH"/>
    <property type="match status" value="1"/>
</dbReference>
<dbReference type="NCBIfam" id="NF001204">
    <property type="entry name" value="PRK00166.1"/>
    <property type="match status" value="1"/>
</dbReference>
<dbReference type="PANTHER" id="PTHR40942">
    <property type="match status" value="1"/>
</dbReference>
<dbReference type="PANTHER" id="PTHR40942:SF4">
    <property type="entry name" value="CYTOCHROME C5"/>
    <property type="match status" value="1"/>
</dbReference>
<dbReference type="Pfam" id="PF00149">
    <property type="entry name" value="Metallophos"/>
    <property type="match status" value="1"/>
</dbReference>
<dbReference type="PIRSF" id="PIRSF000903">
    <property type="entry name" value="B5n-ttraPtase_sm"/>
    <property type="match status" value="1"/>
</dbReference>
<dbReference type="SUPFAM" id="SSF56300">
    <property type="entry name" value="Metallo-dependent phosphatases"/>
    <property type="match status" value="1"/>
</dbReference>
<accession>Q7WF80</accession>
<feature type="chain" id="PRO_0000197978" description="Bis(5'-nucleosyl)-tetraphosphatase, symmetrical">
    <location>
        <begin position="1"/>
        <end position="277"/>
    </location>
</feature>
<proteinExistence type="inferred from homology"/>
<comment type="function">
    <text evidence="1">Hydrolyzes diadenosine 5',5'''-P1,P4-tetraphosphate to yield ADP.</text>
</comment>
<comment type="catalytic activity">
    <reaction evidence="1">
        <text>P(1),P(4)-bis(5'-adenosyl) tetraphosphate + H2O = 2 ADP + 2 H(+)</text>
        <dbReference type="Rhea" id="RHEA:24252"/>
        <dbReference type="ChEBI" id="CHEBI:15377"/>
        <dbReference type="ChEBI" id="CHEBI:15378"/>
        <dbReference type="ChEBI" id="CHEBI:58141"/>
        <dbReference type="ChEBI" id="CHEBI:456216"/>
        <dbReference type="EC" id="3.6.1.41"/>
    </reaction>
</comment>
<comment type="similarity">
    <text evidence="1">Belongs to the Ap4A hydrolase family.</text>
</comment>
<gene>
    <name evidence="1" type="primary">apaH</name>
    <name type="ordered locus">BB4400</name>
</gene>
<evidence type="ECO:0000255" key="1">
    <source>
        <dbReference type="HAMAP-Rule" id="MF_00199"/>
    </source>
</evidence>
<keyword id="KW-0378">Hydrolase</keyword>
<sequence length="277" mass="30511">MKGSIWTIGDVQGCCAPLAELLAHPEIAGDTDSRFWFAGDLVNRGPQSLAVLRRIMAMGERCTAVLGNHDLHLLAAYAGVRKPSKSDTLDEVLQAPDAVDLIDWLRFRPLAHYEAGHLMVHAGVLAKWDVAKTLALAGEVEQALRGPNWRKALQKMYGNEPATWKDDHTGGKRMRVIINALTRIRLCTPSGHMEFATKVAPGAWPAGLVPWFDVPNRATRDVTVVFGHWSTLGLLMRPDVICLDTGCVWGGALSALRLHDRKLVQVKCKRFQDPNGD</sequence>